<reference key="1">
    <citation type="journal article" date="2001" name="Biol. Reprod.">
        <title>Estrogen receptor beta in the sheep ovary during the estrous cycle and early pregnancy.</title>
        <authorList>
            <person name="Cardenas H."/>
            <person name="Burke K.A."/>
            <person name="Bigsby R.M."/>
            <person name="Pope W.F."/>
            <person name="Nephew K.P."/>
        </authorList>
    </citation>
    <scope>NUCLEOTIDE SEQUENCE [MRNA] (ISOFORMS BETA AND BETA-1)</scope>
    <source>
        <tissue>Ovary</tissue>
    </source>
</reference>
<feature type="chain" id="PRO_0000053647" description="Estrogen receptor beta">
    <location>
        <begin position="1"/>
        <end position="527"/>
    </location>
</feature>
<feature type="domain" description="NR LBD" evidence="6">
    <location>
        <begin position="261"/>
        <end position="495"/>
    </location>
</feature>
<feature type="DNA-binding region" description="Nuclear receptor" evidence="5">
    <location>
        <begin position="146"/>
        <end position="211"/>
    </location>
</feature>
<feature type="zinc finger region" description="NR C4-type" evidence="5">
    <location>
        <begin position="146"/>
        <end position="166"/>
    </location>
</feature>
<feature type="zinc finger region" description="NR C4-type" evidence="5">
    <location>
        <begin position="182"/>
        <end position="206"/>
    </location>
</feature>
<feature type="region of interest" description="Modulating">
    <location>
        <begin position="1"/>
        <end position="145"/>
    </location>
</feature>
<feature type="region of interest" description="Disordered" evidence="7">
    <location>
        <begin position="505"/>
        <end position="527"/>
    </location>
</feature>
<feature type="compositionally biased region" description="Basic and acidic residues" evidence="7">
    <location>
        <begin position="506"/>
        <end position="521"/>
    </location>
</feature>
<feature type="modified residue" description="Phosphoserine; by MAPK" evidence="2">
    <location>
        <position position="84"/>
    </location>
</feature>
<feature type="modified residue" description="Phosphoserine; by MAPK" evidence="2">
    <location>
        <position position="102"/>
    </location>
</feature>
<feature type="splice variant" id="VSP_003700" description="In isoform Beta-1." evidence="8">
    <original>FVELSLYDQ</original>
    <variation>MKGNVLKEF</variation>
    <location>
        <begin position="316"/>
        <end position="324"/>
    </location>
</feature>
<feature type="splice variant" id="VSP_003701" description="In isoform Beta-1." evidence="8">
    <location>
        <begin position="325"/>
        <end position="527"/>
    </location>
</feature>
<sequence>MDVKNSPSSLNSPVSYNCGQSILPLEPGPIYLPSSYVESRHEYSAVTFYSPAVMNYSIPNNSEDGPGRQTTSPNVLWPTPGHLSPLAIHCQSSLLYAEPQKSPWCETRSLEHTFPVNRETLKRKASGSSCASPVSSPSSKRDAHFCAVCSDYASGYHYGVWSCEGCKAFFKRSIQGHNDYICPATNQCTIDKNRRKSCQACRLRKCYEVGMVKCGSRRERCGYRIVRRQRNSDEQLHCLSKTKRNGAPMTRVKELLLSALSPEQLVLTLLEAEPPHVLMSRPSAPFTEASMMMSLTKLADKELVHMISWAKKIPGFVELSLYDQVRLLESCWLEVLMVGLMWRSIDHPGKLIFAPDLVLDRDEGKCVEGILEIFDMLLATTSRFRELKLQHKEYLCVKAMILLNSSMYPSATASQEADSGRKLTHLLNAVTDALVWVIAKSGMSSQQQSMRLANLLMLLSHVRHASNKGMEHLLNMKCKNVVPVYDLLLEMLNAHTLRSNKPLVTRSERNLAEDSESKEGSQKPQAQ</sequence>
<proteinExistence type="evidence at transcript level"/>
<comment type="function">
    <text evidence="4">Nuclear hormone receptor. Binds estrogens with an affinity similar to that of ESR1/ER-alpha, and activates expression of reporter genes containing estrogen response elements (ERE) in an estrogen-dependent manner.</text>
</comment>
<comment type="subunit">
    <text evidence="2 3 4">Binds DNA as a homodimer. Can form a heterodimer with ESR1. Interacts with NCOA1, NCOA3, NCOA5 and NCOA6 coactivators, leading to a strong increase of transcription of target genes. Interacts with UBE1C and AKAP13. Interacts with DNTTIP2. Interacts with CCDC62 in the presence of estradiol/E2; this interaction seems to enhance the transcription of target genes. Interacts with DNAAF4. Interacts with PRMT2. Interacts with CCAR2 (via N-terminus) in a ligand-independent manner. Interacts with RBM39, in the presence of estradiol (E2). Interacts with STUB1/CHIP (By similarity).</text>
</comment>
<comment type="subcellular location">
    <subcellularLocation>
        <location evidence="4">Nucleus</location>
    </subcellularLocation>
</comment>
<comment type="alternative products">
    <event type="alternative splicing"/>
    <isoform>
        <id>Q9TU15-1</id>
        <name>Beta</name>
        <sequence type="displayed"/>
    </isoform>
    <isoform>
        <id>Q9TU15-2</id>
        <name>Beta-1</name>
        <sequence type="described" ref="VSP_003700 VSP_003701"/>
    </isoform>
    <text>Additional isoforms seem to exist.</text>
</comment>
<comment type="domain">
    <text>Composed of three domains: a modulating N-terminal domain, a DNA-binding domain and a C-terminal ligand-binding domain.</text>
</comment>
<comment type="PTM">
    <text evidence="1">Phosphorylation at Ser-84 and Ser-102 recruits NCOA1.</text>
</comment>
<comment type="similarity">
    <text evidence="9">Belongs to the nuclear hormone receptor family. NR3 subfamily.</text>
</comment>
<evidence type="ECO:0000250" key="1"/>
<evidence type="ECO:0000250" key="2">
    <source>
        <dbReference type="UniProtKB" id="O08537"/>
    </source>
</evidence>
<evidence type="ECO:0000250" key="3">
    <source>
        <dbReference type="UniProtKB" id="Q62986"/>
    </source>
</evidence>
<evidence type="ECO:0000250" key="4">
    <source>
        <dbReference type="UniProtKB" id="Q92731"/>
    </source>
</evidence>
<evidence type="ECO:0000255" key="5">
    <source>
        <dbReference type="PROSITE-ProRule" id="PRU00407"/>
    </source>
</evidence>
<evidence type="ECO:0000255" key="6">
    <source>
        <dbReference type="PROSITE-ProRule" id="PRU01189"/>
    </source>
</evidence>
<evidence type="ECO:0000256" key="7">
    <source>
        <dbReference type="SAM" id="MobiDB-lite"/>
    </source>
</evidence>
<evidence type="ECO:0000303" key="8">
    <source>
    </source>
</evidence>
<evidence type="ECO:0000305" key="9"/>
<organism>
    <name type="scientific">Ovis aries</name>
    <name type="common">Sheep</name>
    <dbReference type="NCBI Taxonomy" id="9940"/>
    <lineage>
        <taxon>Eukaryota</taxon>
        <taxon>Metazoa</taxon>
        <taxon>Chordata</taxon>
        <taxon>Craniata</taxon>
        <taxon>Vertebrata</taxon>
        <taxon>Euteleostomi</taxon>
        <taxon>Mammalia</taxon>
        <taxon>Eutheria</taxon>
        <taxon>Laurasiatheria</taxon>
        <taxon>Artiodactyla</taxon>
        <taxon>Ruminantia</taxon>
        <taxon>Pecora</taxon>
        <taxon>Bovidae</taxon>
        <taxon>Caprinae</taxon>
        <taxon>Ovis</taxon>
    </lineage>
</organism>
<keyword id="KW-0010">Activator</keyword>
<keyword id="KW-0025">Alternative splicing</keyword>
<keyword id="KW-0238">DNA-binding</keyword>
<keyword id="KW-0446">Lipid-binding</keyword>
<keyword id="KW-0479">Metal-binding</keyword>
<keyword id="KW-0539">Nucleus</keyword>
<keyword id="KW-0597">Phosphoprotein</keyword>
<keyword id="KW-0675">Receptor</keyword>
<keyword id="KW-1185">Reference proteome</keyword>
<keyword id="KW-0754">Steroid-binding</keyword>
<keyword id="KW-0804">Transcription</keyword>
<keyword id="KW-0805">Transcription regulation</keyword>
<keyword id="KW-0862">Zinc</keyword>
<keyword id="KW-0863">Zinc-finger</keyword>
<name>ESR2_SHEEP</name>
<gene>
    <name type="primary">ESR2</name>
    <name type="synonym">NR3A2</name>
</gene>
<protein>
    <recommendedName>
        <fullName>Estrogen receptor beta</fullName>
        <shortName>ER-beta</shortName>
    </recommendedName>
    <alternativeName>
        <fullName>Nuclear receptor subfamily 3 group A member 2</fullName>
    </alternativeName>
</protein>
<accession>Q9TU15</accession>
<accession>Q9N0T6</accession>
<dbReference type="EMBL" id="AF177936">
    <property type="protein sequence ID" value="AAD55772.1"/>
    <property type="molecule type" value="mRNA"/>
</dbReference>
<dbReference type="EMBL" id="AF257109">
    <property type="protein sequence ID" value="AAF71745.1"/>
    <property type="molecule type" value="mRNA"/>
</dbReference>
<dbReference type="RefSeq" id="NP_001009737.1">
    <molecule id="Q9TU15-1"/>
    <property type="nucleotide sequence ID" value="NM_001009737.1"/>
</dbReference>
<dbReference type="RefSeq" id="XP_042107873.1">
    <molecule id="Q9TU15-1"/>
    <property type="nucleotide sequence ID" value="XM_042251939.2"/>
</dbReference>
<dbReference type="RefSeq" id="XP_060273751.1">
    <molecule id="Q9TU15-1"/>
    <property type="nucleotide sequence ID" value="XM_060417768.1"/>
</dbReference>
<dbReference type="SMR" id="Q9TU15"/>
<dbReference type="STRING" id="9940.ENSOARP00000022731"/>
<dbReference type="BindingDB" id="Q9TU15"/>
<dbReference type="ChEMBL" id="CHEMBL2304421"/>
<dbReference type="PaxDb" id="9940-ENSOARP00000022731"/>
<dbReference type="Ensembl" id="ENSOART00225029226">
    <molecule id="Q9TU15-1"/>
    <property type="protein sequence ID" value="ENSOARP00225014339"/>
    <property type="gene ID" value="ENSOARG00225017814"/>
</dbReference>
<dbReference type="Ensembl" id="ENSOART00260035374">
    <molecule id="Q9TU15-1"/>
    <property type="protein sequence ID" value="ENSOARP00260018044"/>
    <property type="gene ID" value="ENSOARG00260021662"/>
</dbReference>
<dbReference type="GeneID" id="443066"/>
<dbReference type="KEGG" id="oas:443066"/>
<dbReference type="CTD" id="2100"/>
<dbReference type="eggNOG" id="KOG3575">
    <property type="taxonomic scope" value="Eukaryota"/>
</dbReference>
<dbReference type="OrthoDB" id="5799427at2759"/>
<dbReference type="Proteomes" id="UP000002356">
    <property type="component" value="Unplaced"/>
</dbReference>
<dbReference type="GO" id="GO:0005739">
    <property type="term" value="C:mitochondrion"/>
    <property type="evidence" value="ECO:0007669"/>
    <property type="project" value="Ensembl"/>
</dbReference>
<dbReference type="GO" id="GO:0005654">
    <property type="term" value="C:nucleoplasm"/>
    <property type="evidence" value="ECO:0007669"/>
    <property type="project" value="Ensembl"/>
</dbReference>
<dbReference type="GO" id="GO:0005634">
    <property type="term" value="C:nucleus"/>
    <property type="evidence" value="ECO:0000250"/>
    <property type="project" value="UniProtKB"/>
</dbReference>
<dbReference type="GO" id="GO:0019899">
    <property type="term" value="F:enzyme binding"/>
    <property type="evidence" value="ECO:0007669"/>
    <property type="project" value="Ensembl"/>
</dbReference>
<dbReference type="GO" id="GO:0034056">
    <property type="term" value="F:estrogen response element binding"/>
    <property type="evidence" value="ECO:0007669"/>
    <property type="project" value="Ensembl"/>
</dbReference>
<dbReference type="GO" id="GO:0030284">
    <property type="term" value="F:nuclear estrogen receptor activity"/>
    <property type="evidence" value="ECO:0007669"/>
    <property type="project" value="Ensembl"/>
</dbReference>
<dbReference type="GO" id="GO:0005496">
    <property type="term" value="F:steroid binding"/>
    <property type="evidence" value="ECO:0000250"/>
    <property type="project" value="UniProtKB"/>
</dbReference>
<dbReference type="GO" id="GO:0008270">
    <property type="term" value="F:zinc ion binding"/>
    <property type="evidence" value="ECO:0007669"/>
    <property type="project" value="UniProtKB-KW"/>
</dbReference>
<dbReference type="GO" id="GO:0071392">
    <property type="term" value="P:cellular response to estradiol stimulus"/>
    <property type="evidence" value="ECO:0007669"/>
    <property type="project" value="InterPro"/>
</dbReference>
<dbReference type="GO" id="GO:0030520">
    <property type="term" value="P:estrogen receptor signaling pathway"/>
    <property type="evidence" value="ECO:0007669"/>
    <property type="project" value="InterPro"/>
</dbReference>
<dbReference type="GO" id="GO:0000122">
    <property type="term" value="P:negative regulation of transcription by RNA polymerase II"/>
    <property type="evidence" value="ECO:0007669"/>
    <property type="project" value="Ensembl"/>
</dbReference>
<dbReference type="GO" id="GO:0051091">
    <property type="term" value="P:positive regulation of DNA-binding transcription factor activity"/>
    <property type="evidence" value="ECO:0000250"/>
    <property type="project" value="UniProtKB"/>
</dbReference>
<dbReference type="GO" id="GO:0045893">
    <property type="term" value="P:positive regulation of DNA-templated transcription"/>
    <property type="evidence" value="ECO:0000250"/>
    <property type="project" value="UniProtKB"/>
</dbReference>
<dbReference type="CDD" id="cd07171">
    <property type="entry name" value="NR_DBD_ER"/>
    <property type="match status" value="1"/>
</dbReference>
<dbReference type="CDD" id="cd06949">
    <property type="entry name" value="NR_LBD_ER"/>
    <property type="match status" value="1"/>
</dbReference>
<dbReference type="FunFam" id="1.10.565.10:FF:000010">
    <property type="entry name" value="Estrogen receptor"/>
    <property type="match status" value="1"/>
</dbReference>
<dbReference type="FunFam" id="3.30.50.10:FF:000014">
    <property type="entry name" value="Estrogen receptor beta"/>
    <property type="match status" value="1"/>
</dbReference>
<dbReference type="Gene3D" id="3.30.50.10">
    <property type="entry name" value="Erythroid Transcription Factor GATA-1, subunit A"/>
    <property type="match status" value="1"/>
</dbReference>
<dbReference type="Gene3D" id="1.10.565.10">
    <property type="entry name" value="Retinoid X Receptor"/>
    <property type="match status" value="1"/>
</dbReference>
<dbReference type="InterPro" id="IPR021064">
    <property type="entry name" value="ER-beta-like_N"/>
</dbReference>
<dbReference type="InterPro" id="IPR028355">
    <property type="entry name" value="ER-beta/gamma"/>
</dbReference>
<dbReference type="InterPro" id="IPR024178">
    <property type="entry name" value="Est_rcpt/est-rel_rcp"/>
</dbReference>
<dbReference type="InterPro" id="IPR035500">
    <property type="entry name" value="NHR-like_dom_sf"/>
</dbReference>
<dbReference type="InterPro" id="IPR000536">
    <property type="entry name" value="Nucl_hrmn_rcpt_lig-bd"/>
</dbReference>
<dbReference type="InterPro" id="IPR050200">
    <property type="entry name" value="Nuclear_hormone_rcpt_NR3"/>
</dbReference>
<dbReference type="InterPro" id="IPR001723">
    <property type="entry name" value="Nuclear_hrmn_rcpt"/>
</dbReference>
<dbReference type="InterPro" id="IPR001628">
    <property type="entry name" value="Znf_hrmn_rcpt"/>
</dbReference>
<dbReference type="InterPro" id="IPR013088">
    <property type="entry name" value="Znf_NHR/GATA"/>
</dbReference>
<dbReference type="PANTHER" id="PTHR48092">
    <property type="entry name" value="KNIRPS-RELATED PROTEIN-RELATED"/>
    <property type="match status" value="1"/>
</dbReference>
<dbReference type="Pfam" id="PF12497">
    <property type="entry name" value="ERbeta_N"/>
    <property type="match status" value="1"/>
</dbReference>
<dbReference type="Pfam" id="PF00104">
    <property type="entry name" value="Hormone_recep"/>
    <property type="match status" value="1"/>
</dbReference>
<dbReference type="Pfam" id="PF00105">
    <property type="entry name" value="zf-C4"/>
    <property type="match status" value="1"/>
</dbReference>
<dbReference type="PIRSF" id="PIRSF500102">
    <property type="entry name" value="ER-b"/>
    <property type="match status" value="1"/>
</dbReference>
<dbReference type="PIRSF" id="PIRSF002527">
    <property type="entry name" value="ER-like_NR"/>
    <property type="match status" value="1"/>
</dbReference>
<dbReference type="PRINTS" id="PR00398">
    <property type="entry name" value="STRDHORMONER"/>
</dbReference>
<dbReference type="PRINTS" id="PR00047">
    <property type="entry name" value="STROIDFINGER"/>
</dbReference>
<dbReference type="SMART" id="SM00430">
    <property type="entry name" value="HOLI"/>
    <property type="match status" value="1"/>
</dbReference>
<dbReference type="SMART" id="SM00399">
    <property type="entry name" value="ZnF_C4"/>
    <property type="match status" value="1"/>
</dbReference>
<dbReference type="SUPFAM" id="SSF57716">
    <property type="entry name" value="Glucocorticoid receptor-like (DNA-binding domain)"/>
    <property type="match status" value="1"/>
</dbReference>
<dbReference type="SUPFAM" id="SSF48508">
    <property type="entry name" value="Nuclear receptor ligand-binding domain"/>
    <property type="match status" value="1"/>
</dbReference>
<dbReference type="PROSITE" id="PS51843">
    <property type="entry name" value="NR_LBD"/>
    <property type="match status" value="1"/>
</dbReference>
<dbReference type="PROSITE" id="PS00031">
    <property type="entry name" value="NUCLEAR_REC_DBD_1"/>
    <property type="match status" value="1"/>
</dbReference>
<dbReference type="PROSITE" id="PS51030">
    <property type="entry name" value="NUCLEAR_REC_DBD_2"/>
    <property type="match status" value="1"/>
</dbReference>